<organism>
    <name type="scientific">Pseudomonas putida (strain ATCC 700007 / DSM 6899 / JCM 31910 / BCRC 17059 / LMG 24140 / F1)</name>
    <dbReference type="NCBI Taxonomy" id="351746"/>
    <lineage>
        <taxon>Bacteria</taxon>
        <taxon>Pseudomonadati</taxon>
        <taxon>Pseudomonadota</taxon>
        <taxon>Gammaproteobacteria</taxon>
        <taxon>Pseudomonadales</taxon>
        <taxon>Pseudomonadaceae</taxon>
        <taxon>Pseudomonas</taxon>
    </lineage>
</organism>
<evidence type="ECO:0000255" key="1">
    <source>
        <dbReference type="HAMAP-Rule" id="MF_00557"/>
    </source>
</evidence>
<comment type="function">
    <text evidence="1">Catalyzes the depolymerization of alginate by cleaving the beta-1,4 glycosidic bond between two adjacent sugar residues via a beta-elimination mechanism. May serve to degrade mislocalized alginate that is trapped in the periplasmic space.</text>
</comment>
<comment type="catalytic activity">
    <reaction evidence="1">
        <text>Eliminative cleavage of alginate to give oligosaccharides with 4-deoxy-alpha-L-erythro-hex-4-enuronosyl groups at their non-reducing ends and beta-D-mannuronate at their reducing end.</text>
        <dbReference type="EC" id="4.2.2.3"/>
    </reaction>
</comment>
<comment type="subcellular location">
    <subcellularLocation>
        <location evidence="1">Periplasm</location>
    </subcellularLocation>
</comment>
<comment type="similarity">
    <text evidence="1">Belongs to the polysaccharide lyase 5 family.</text>
</comment>
<dbReference type="EC" id="4.2.2.3" evidence="1"/>
<dbReference type="EMBL" id="CP000712">
    <property type="protein sequence ID" value="ABQ80564.1"/>
    <property type="molecule type" value="Genomic_DNA"/>
</dbReference>
<dbReference type="SMR" id="A5W8V4"/>
<dbReference type="CAZy" id="PL5">
    <property type="family name" value="Polysaccharide Lyase Family 5"/>
</dbReference>
<dbReference type="KEGG" id="ppf:Pput_4444"/>
<dbReference type="eggNOG" id="ENOG502ZAMJ">
    <property type="taxonomic scope" value="Bacteria"/>
</dbReference>
<dbReference type="HOGENOM" id="CLU_064286_0_0_6"/>
<dbReference type="GO" id="GO:0042597">
    <property type="term" value="C:periplasmic space"/>
    <property type="evidence" value="ECO:0007669"/>
    <property type="project" value="UniProtKB-SubCell"/>
</dbReference>
<dbReference type="GO" id="GO:0045135">
    <property type="term" value="F:poly(beta-D-mannuronate) lyase activity"/>
    <property type="evidence" value="ECO:0007669"/>
    <property type="project" value="UniProtKB-UniRule"/>
</dbReference>
<dbReference type="GO" id="GO:0042122">
    <property type="term" value="P:alginic acid catabolic process"/>
    <property type="evidence" value="ECO:0007669"/>
    <property type="project" value="UniProtKB-UniRule"/>
</dbReference>
<dbReference type="CDD" id="cd00244">
    <property type="entry name" value="AlgLyase"/>
    <property type="match status" value="1"/>
</dbReference>
<dbReference type="Gene3D" id="1.50.10.100">
    <property type="entry name" value="Chondroitin AC/alginate lyase"/>
    <property type="match status" value="1"/>
</dbReference>
<dbReference type="HAMAP" id="MF_00557">
    <property type="entry name" value="Alginate_lyase"/>
    <property type="match status" value="1"/>
</dbReference>
<dbReference type="InterPro" id="IPR022859">
    <property type="entry name" value="Alginate_lyase"/>
</dbReference>
<dbReference type="InterPro" id="IPR008397">
    <property type="entry name" value="Alginate_lyase_dom"/>
</dbReference>
<dbReference type="InterPro" id="IPR008929">
    <property type="entry name" value="Chondroitin_lyas"/>
</dbReference>
<dbReference type="NCBIfam" id="NF001467">
    <property type="entry name" value="PRK00325.1-2"/>
    <property type="match status" value="1"/>
</dbReference>
<dbReference type="NCBIfam" id="NF001470">
    <property type="entry name" value="PRK00325.1-5"/>
    <property type="match status" value="1"/>
</dbReference>
<dbReference type="Pfam" id="PF05426">
    <property type="entry name" value="Alginate_lyase"/>
    <property type="match status" value="1"/>
</dbReference>
<dbReference type="SUPFAM" id="SSF48230">
    <property type="entry name" value="Chondroitin AC/alginate lyase"/>
    <property type="match status" value="1"/>
</dbReference>
<name>ALGL_PSEP1</name>
<protein>
    <recommendedName>
        <fullName evidence="1">Alginate lyase</fullName>
        <ecNumber evidence="1">4.2.2.3</ecNumber>
    </recommendedName>
    <alternativeName>
        <fullName evidence="1">Poly(beta-D-mannuronate) lyase</fullName>
    </alternativeName>
</protein>
<feature type="signal peptide" evidence="1">
    <location>
        <begin position="1"/>
        <end position="24"/>
    </location>
</feature>
<feature type="chain" id="PRO_5000252423" description="Alginate lyase">
    <location>
        <begin position="25"/>
        <end position="367"/>
    </location>
</feature>
<feature type="binding site" evidence="1">
    <location>
        <begin position="63"/>
        <end position="64"/>
    </location>
    <ligand>
        <name>substrate</name>
    </ligand>
</feature>
<feature type="binding site" evidence="1">
    <location>
        <begin position="136"/>
        <end position="137"/>
    </location>
    <ligand>
        <name>substrate</name>
    </ligand>
</feature>
<feature type="binding site" evidence="1">
    <location>
        <position position="254"/>
    </location>
    <ligand>
        <name>substrate</name>
    </ligand>
</feature>
<sequence>MTIFKRISSPALLALALFGGAAHAALVPPQGYYQGIEKLKTGEGNFRCEAAPKPYTGPLQFRSKYEGSDKARATLNAASEKAFRTSTEDITTLEKGVSKMVGQYMRDGRPAQLDCTLTWLGSWARAGALLSTDYNHTGKSMRKWALGSMSGSWLRLKFSNSQPLAAHQAEADLIEKWLSRLAEQTVRDWSDLPLEKINNHSYWAAWSVMATAVATDRRDLFDWAVKEYKVGANQVDDQGFLPNEIKRKQRALAYHNYALPPLAMIASFAQANGVDLRAENNFALQRLGEGVLAGARDPSHFKARAGKKQDMTDLKVDSKYSWLEPWCALYHCVGDTLERKHDMQPFNSFRLGGDVTRVYDPSAESKK</sequence>
<accession>A5W8V4</accession>
<proteinExistence type="inferred from homology"/>
<keyword id="KW-0456">Lyase</keyword>
<keyword id="KW-0574">Periplasm</keyword>
<keyword id="KW-0732">Signal</keyword>
<gene>
    <name evidence="1" type="primary">algL</name>
    <name type="ordered locus">Pput_4444</name>
</gene>
<reference key="1">
    <citation type="submission" date="2007-05" db="EMBL/GenBank/DDBJ databases">
        <title>Complete sequence of Pseudomonas putida F1.</title>
        <authorList>
            <consortium name="US DOE Joint Genome Institute"/>
            <person name="Copeland A."/>
            <person name="Lucas S."/>
            <person name="Lapidus A."/>
            <person name="Barry K."/>
            <person name="Detter J.C."/>
            <person name="Glavina del Rio T."/>
            <person name="Hammon N."/>
            <person name="Israni S."/>
            <person name="Dalin E."/>
            <person name="Tice H."/>
            <person name="Pitluck S."/>
            <person name="Chain P."/>
            <person name="Malfatti S."/>
            <person name="Shin M."/>
            <person name="Vergez L."/>
            <person name="Schmutz J."/>
            <person name="Larimer F."/>
            <person name="Land M."/>
            <person name="Hauser L."/>
            <person name="Kyrpides N."/>
            <person name="Lykidis A."/>
            <person name="Parales R."/>
            <person name="Richardson P."/>
        </authorList>
    </citation>
    <scope>NUCLEOTIDE SEQUENCE [LARGE SCALE GENOMIC DNA]</scope>
    <source>
        <strain>ATCC 700007 / DSM 6899 / JCM 31910 / BCRC 17059 / LMG 24140 / F1</strain>
    </source>
</reference>